<name>RS3_NEIM0</name>
<keyword id="KW-0687">Ribonucleoprotein</keyword>
<keyword id="KW-0689">Ribosomal protein</keyword>
<keyword id="KW-0694">RNA-binding</keyword>
<keyword id="KW-0699">rRNA-binding</keyword>
<sequence>MGQKINPTGFRLAVTKDWASKWFAKSTDFSTVLKQDIDVRNYLRQKLANASVGRVVIERPAKSARITIHSARPGVVIGKKGEDIEVLKRDLQVLMGVPVHVNIEEIRRPELDAQIIADGIAQQLEKRVQFRRAMKRAMQNAMRSGAKGIKIMTSGRLNGADIARSEWYREGRVPLHTLRANVDYATSEAHTTYGVLGLKVWVYTEGNIKSSKPEHESKQRKAGRRNAAAN</sequence>
<accession>A9M3W0</accession>
<reference key="1">
    <citation type="journal article" date="2008" name="Genomics">
        <title>Characterization of ST-4821 complex, a unique Neisseria meningitidis clone.</title>
        <authorList>
            <person name="Peng J."/>
            <person name="Yang L."/>
            <person name="Yang F."/>
            <person name="Yang J."/>
            <person name="Yan Y."/>
            <person name="Nie H."/>
            <person name="Zhang X."/>
            <person name="Xiong Z."/>
            <person name="Jiang Y."/>
            <person name="Cheng F."/>
            <person name="Xu X."/>
            <person name="Chen S."/>
            <person name="Sun L."/>
            <person name="Li W."/>
            <person name="Shen Y."/>
            <person name="Shao Z."/>
            <person name="Liang X."/>
            <person name="Xu J."/>
            <person name="Jin Q."/>
        </authorList>
    </citation>
    <scope>NUCLEOTIDE SEQUENCE [LARGE SCALE GENOMIC DNA]</scope>
    <source>
        <strain>053442</strain>
    </source>
</reference>
<organism>
    <name type="scientific">Neisseria meningitidis serogroup C (strain 053442)</name>
    <dbReference type="NCBI Taxonomy" id="374833"/>
    <lineage>
        <taxon>Bacteria</taxon>
        <taxon>Pseudomonadati</taxon>
        <taxon>Pseudomonadota</taxon>
        <taxon>Betaproteobacteria</taxon>
        <taxon>Neisseriales</taxon>
        <taxon>Neisseriaceae</taxon>
        <taxon>Neisseria</taxon>
    </lineage>
</organism>
<dbReference type="EMBL" id="CP000381">
    <property type="protein sequence ID" value="ABX74122.1"/>
    <property type="molecule type" value="Genomic_DNA"/>
</dbReference>
<dbReference type="RefSeq" id="WP_002215427.1">
    <property type="nucleotide sequence ID" value="NC_010120.1"/>
</dbReference>
<dbReference type="SMR" id="A9M3W0"/>
<dbReference type="GeneID" id="93387223"/>
<dbReference type="KEGG" id="nmn:NMCC_1999"/>
<dbReference type="HOGENOM" id="CLU_058591_0_2_4"/>
<dbReference type="Proteomes" id="UP000001177">
    <property type="component" value="Chromosome"/>
</dbReference>
<dbReference type="GO" id="GO:0022627">
    <property type="term" value="C:cytosolic small ribosomal subunit"/>
    <property type="evidence" value="ECO:0007669"/>
    <property type="project" value="TreeGrafter"/>
</dbReference>
<dbReference type="GO" id="GO:0003729">
    <property type="term" value="F:mRNA binding"/>
    <property type="evidence" value="ECO:0007669"/>
    <property type="project" value="UniProtKB-UniRule"/>
</dbReference>
<dbReference type="GO" id="GO:0019843">
    <property type="term" value="F:rRNA binding"/>
    <property type="evidence" value="ECO:0007669"/>
    <property type="project" value="UniProtKB-UniRule"/>
</dbReference>
<dbReference type="GO" id="GO:0003735">
    <property type="term" value="F:structural constituent of ribosome"/>
    <property type="evidence" value="ECO:0007669"/>
    <property type="project" value="InterPro"/>
</dbReference>
<dbReference type="GO" id="GO:0006412">
    <property type="term" value="P:translation"/>
    <property type="evidence" value="ECO:0007669"/>
    <property type="project" value="UniProtKB-UniRule"/>
</dbReference>
<dbReference type="CDD" id="cd02412">
    <property type="entry name" value="KH-II_30S_S3"/>
    <property type="match status" value="1"/>
</dbReference>
<dbReference type="FunFam" id="3.30.1140.32:FF:000006">
    <property type="entry name" value="30S ribosomal protein S3"/>
    <property type="match status" value="1"/>
</dbReference>
<dbReference type="FunFam" id="3.30.300.20:FF:000001">
    <property type="entry name" value="30S ribosomal protein S3"/>
    <property type="match status" value="1"/>
</dbReference>
<dbReference type="Gene3D" id="3.30.300.20">
    <property type="match status" value="1"/>
</dbReference>
<dbReference type="Gene3D" id="3.30.1140.32">
    <property type="entry name" value="Ribosomal protein S3, C-terminal domain"/>
    <property type="match status" value="1"/>
</dbReference>
<dbReference type="HAMAP" id="MF_01309_B">
    <property type="entry name" value="Ribosomal_uS3_B"/>
    <property type="match status" value="1"/>
</dbReference>
<dbReference type="InterPro" id="IPR004087">
    <property type="entry name" value="KH_dom"/>
</dbReference>
<dbReference type="InterPro" id="IPR015946">
    <property type="entry name" value="KH_dom-like_a/b"/>
</dbReference>
<dbReference type="InterPro" id="IPR004044">
    <property type="entry name" value="KH_dom_type_2"/>
</dbReference>
<dbReference type="InterPro" id="IPR009019">
    <property type="entry name" value="KH_sf_prok-type"/>
</dbReference>
<dbReference type="InterPro" id="IPR036419">
    <property type="entry name" value="Ribosomal_S3_C_sf"/>
</dbReference>
<dbReference type="InterPro" id="IPR005704">
    <property type="entry name" value="Ribosomal_uS3_bac-typ"/>
</dbReference>
<dbReference type="InterPro" id="IPR001351">
    <property type="entry name" value="Ribosomal_uS3_C"/>
</dbReference>
<dbReference type="InterPro" id="IPR018280">
    <property type="entry name" value="Ribosomal_uS3_CS"/>
</dbReference>
<dbReference type="NCBIfam" id="TIGR01009">
    <property type="entry name" value="rpsC_bact"/>
    <property type="match status" value="1"/>
</dbReference>
<dbReference type="PANTHER" id="PTHR11760">
    <property type="entry name" value="30S/40S RIBOSOMAL PROTEIN S3"/>
    <property type="match status" value="1"/>
</dbReference>
<dbReference type="PANTHER" id="PTHR11760:SF19">
    <property type="entry name" value="SMALL RIBOSOMAL SUBUNIT PROTEIN US3C"/>
    <property type="match status" value="1"/>
</dbReference>
<dbReference type="Pfam" id="PF07650">
    <property type="entry name" value="KH_2"/>
    <property type="match status" value="1"/>
</dbReference>
<dbReference type="Pfam" id="PF00189">
    <property type="entry name" value="Ribosomal_S3_C"/>
    <property type="match status" value="1"/>
</dbReference>
<dbReference type="SMART" id="SM00322">
    <property type="entry name" value="KH"/>
    <property type="match status" value="1"/>
</dbReference>
<dbReference type="SUPFAM" id="SSF54814">
    <property type="entry name" value="Prokaryotic type KH domain (KH-domain type II)"/>
    <property type="match status" value="1"/>
</dbReference>
<dbReference type="SUPFAM" id="SSF54821">
    <property type="entry name" value="Ribosomal protein S3 C-terminal domain"/>
    <property type="match status" value="1"/>
</dbReference>
<dbReference type="PROSITE" id="PS50823">
    <property type="entry name" value="KH_TYPE_2"/>
    <property type="match status" value="1"/>
</dbReference>
<dbReference type="PROSITE" id="PS00548">
    <property type="entry name" value="RIBOSOMAL_S3"/>
    <property type="match status" value="1"/>
</dbReference>
<protein>
    <recommendedName>
        <fullName evidence="1">Small ribosomal subunit protein uS3</fullName>
    </recommendedName>
    <alternativeName>
        <fullName evidence="3">30S ribosomal protein S3</fullName>
    </alternativeName>
</protein>
<proteinExistence type="inferred from homology"/>
<comment type="function">
    <text evidence="1">Binds the lower part of the 30S subunit head. Binds mRNA in the 70S ribosome, positioning it for translation.</text>
</comment>
<comment type="subunit">
    <text evidence="1">Part of the 30S ribosomal subunit. Forms a tight complex with proteins S10 and S14.</text>
</comment>
<comment type="similarity">
    <text evidence="1">Belongs to the universal ribosomal protein uS3 family.</text>
</comment>
<feature type="chain" id="PRO_1000086137" description="Small ribosomal subunit protein uS3">
    <location>
        <begin position="1"/>
        <end position="230"/>
    </location>
</feature>
<feature type="domain" description="KH type-2" evidence="1">
    <location>
        <begin position="39"/>
        <end position="107"/>
    </location>
</feature>
<feature type="region of interest" description="Disordered" evidence="2">
    <location>
        <begin position="210"/>
        <end position="230"/>
    </location>
</feature>
<evidence type="ECO:0000255" key="1">
    <source>
        <dbReference type="HAMAP-Rule" id="MF_01309"/>
    </source>
</evidence>
<evidence type="ECO:0000256" key="2">
    <source>
        <dbReference type="SAM" id="MobiDB-lite"/>
    </source>
</evidence>
<evidence type="ECO:0000305" key="3"/>
<gene>
    <name evidence="1" type="primary">rpsC</name>
    <name type="ordered locus">NMCC_1999</name>
</gene>